<protein>
    <recommendedName>
        <fullName evidence="2">PTTG1IP family member 2</fullName>
    </recommendedName>
</protein>
<evidence type="ECO:0000255" key="1"/>
<evidence type="ECO:0000305" key="2"/>
<evidence type="ECO:0000312" key="3">
    <source>
        <dbReference type="HGNC" id="HGNC:55318"/>
    </source>
</evidence>
<feature type="signal peptide" evidence="1">
    <location>
        <begin position="1"/>
        <end position="26"/>
    </location>
</feature>
<feature type="chain" id="PRO_0000452020" description="PTTG1IP family member 2" evidence="1">
    <location>
        <begin position="27"/>
        <end position="154"/>
    </location>
</feature>
<feature type="topological domain" description="Extracellular" evidence="2">
    <location>
        <begin position="27"/>
        <end position="97"/>
    </location>
</feature>
<feature type="transmembrane region" description="Helical" evidence="1">
    <location>
        <begin position="98"/>
        <end position="118"/>
    </location>
</feature>
<feature type="topological domain" description="Cytoplasmic" evidence="2">
    <location>
        <begin position="119"/>
        <end position="154"/>
    </location>
</feature>
<accession>P0DTF9</accession>
<keyword id="KW-0472">Membrane</keyword>
<keyword id="KW-1267">Proteomics identification</keyword>
<keyword id="KW-1185">Reference proteome</keyword>
<keyword id="KW-0732">Signal</keyword>
<keyword id="KW-0812">Transmembrane</keyword>
<keyword id="KW-1133">Transmembrane helix</keyword>
<reference key="1">
    <citation type="journal article" date="2003" name="Nature">
        <title>The DNA sequence of human chromosome 7.</title>
        <authorList>
            <person name="Hillier L.W."/>
            <person name="Fulton R.S."/>
            <person name="Fulton L.A."/>
            <person name="Graves T.A."/>
            <person name="Pepin K.H."/>
            <person name="Wagner-McPherson C."/>
            <person name="Layman D."/>
            <person name="Maas J."/>
            <person name="Jaeger S."/>
            <person name="Walker R."/>
            <person name="Wylie K."/>
            <person name="Sekhon M."/>
            <person name="Becker M.C."/>
            <person name="O'Laughlin M.D."/>
            <person name="Schaller M.E."/>
            <person name="Fewell G.A."/>
            <person name="Delehaunty K.D."/>
            <person name="Miner T.L."/>
            <person name="Nash W.E."/>
            <person name="Cordes M."/>
            <person name="Du H."/>
            <person name="Sun H."/>
            <person name="Edwards J."/>
            <person name="Bradshaw-Cordum H."/>
            <person name="Ali J."/>
            <person name="Andrews S."/>
            <person name="Isak A."/>
            <person name="Vanbrunt A."/>
            <person name="Nguyen C."/>
            <person name="Du F."/>
            <person name="Lamar B."/>
            <person name="Courtney L."/>
            <person name="Kalicki J."/>
            <person name="Ozersky P."/>
            <person name="Bielicki L."/>
            <person name="Scott K."/>
            <person name="Holmes A."/>
            <person name="Harkins R."/>
            <person name="Harris A."/>
            <person name="Strong C.M."/>
            <person name="Hou S."/>
            <person name="Tomlinson C."/>
            <person name="Dauphin-Kohlberg S."/>
            <person name="Kozlowicz-Reilly A."/>
            <person name="Leonard S."/>
            <person name="Rohlfing T."/>
            <person name="Rock S.M."/>
            <person name="Tin-Wollam A.-M."/>
            <person name="Abbott A."/>
            <person name="Minx P."/>
            <person name="Maupin R."/>
            <person name="Strowmatt C."/>
            <person name="Latreille P."/>
            <person name="Miller N."/>
            <person name="Johnson D."/>
            <person name="Murray J."/>
            <person name="Woessner J.P."/>
            <person name="Wendl M.C."/>
            <person name="Yang S.-P."/>
            <person name="Schultz B.R."/>
            <person name="Wallis J.W."/>
            <person name="Spieth J."/>
            <person name="Bieri T.A."/>
            <person name="Nelson J.O."/>
            <person name="Berkowicz N."/>
            <person name="Wohldmann P.E."/>
            <person name="Cook L.L."/>
            <person name="Hickenbotham M.T."/>
            <person name="Eldred J."/>
            <person name="Williams D."/>
            <person name="Bedell J.A."/>
            <person name="Mardis E.R."/>
            <person name="Clifton S.W."/>
            <person name="Chissoe S.L."/>
            <person name="Marra M.A."/>
            <person name="Raymond C."/>
            <person name="Haugen E."/>
            <person name="Gillett W."/>
            <person name="Zhou Y."/>
            <person name="James R."/>
            <person name="Phelps K."/>
            <person name="Iadanoto S."/>
            <person name="Bubb K."/>
            <person name="Simms E."/>
            <person name="Levy R."/>
            <person name="Clendenning J."/>
            <person name="Kaul R."/>
            <person name="Kent W.J."/>
            <person name="Furey T.S."/>
            <person name="Baertsch R.A."/>
            <person name="Brent M.R."/>
            <person name="Keibler E."/>
            <person name="Flicek P."/>
            <person name="Bork P."/>
            <person name="Suyama M."/>
            <person name="Bailey J.A."/>
            <person name="Portnoy M.E."/>
            <person name="Torrents D."/>
            <person name="Chinwalla A.T."/>
            <person name="Gish W.R."/>
            <person name="Eddy S.R."/>
            <person name="McPherson J.D."/>
            <person name="Olson M.V."/>
            <person name="Eichler E.E."/>
            <person name="Green E.D."/>
            <person name="Waterston R.H."/>
            <person name="Wilson R.K."/>
        </authorList>
    </citation>
    <scope>NUCLEOTIDE SEQUENCE [LARGE SCALE GENOMIC DNA]</scope>
</reference>
<comment type="subcellular location">
    <subcellularLocation>
        <location evidence="1">Membrane</location>
        <topology evidence="1">Single-pass type I membrane protein</topology>
    </subcellularLocation>
</comment>
<gene>
    <name evidence="3" type="primary">PTTG1IP2</name>
</gene>
<proteinExistence type="evidence at protein level"/>
<sequence>MCWLRAWGQILLPVFLSLFLIQLLISFSENGFIHSPRNNQKPRDGNEEECAVKKSCQLCTEDKKCVWCSEEKACKKYCFPYFGCRFSSIYWLNCKVDMFGIMMLLLIAVLITGFVWYCCAYHFYLQDLNRNRVYFYGRRETVPIHDRSATVYDE</sequence>
<name>PTIP2_HUMAN</name>
<organism>
    <name type="scientific">Homo sapiens</name>
    <name type="common">Human</name>
    <dbReference type="NCBI Taxonomy" id="9606"/>
    <lineage>
        <taxon>Eukaryota</taxon>
        <taxon>Metazoa</taxon>
        <taxon>Chordata</taxon>
        <taxon>Craniata</taxon>
        <taxon>Vertebrata</taxon>
        <taxon>Euteleostomi</taxon>
        <taxon>Mammalia</taxon>
        <taxon>Eutheria</taxon>
        <taxon>Euarchontoglires</taxon>
        <taxon>Primates</taxon>
        <taxon>Haplorrhini</taxon>
        <taxon>Catarrhini</taxon>
        <taxon>Hominidae</taxon>
        <taxon>Homo</taxon>
    </lineage>
</organism>
<dbReference type="EMBL" id="AC002456">
    <property type="status" value="NOT_ANNOTATED_CDS"/>
    <property type="molecule type" value="Genomic_DNA"/>
</dbReference>
<dbReference type="EMBL" id="KF458505">
    <property type="status" value="NOT_ANNOTATED_CDS"/>
    <property type="molecule type" value="Genomic_DNA"/>
</dbReference>
<dbReference type="CCDS" id="CCDS94140.1"/>
<dbReference type="RefSeq" id="NP_001352372.1">
    <property type="nucleotide sequence ID" value="NM_001365443.2"/>
</dbReference>
<dbReference type="RefSeq" id="XP_016868378.1">
    <property type="nucleotide sequence ID" value="XM_017012889.1"/>
</dbReference>
<dbReference type="RefSeq" id="XP_016885904.1">
    <property type="nucleotide sequence ID" value="XM_017030415.1"/>
</dbReference>
<dbReference type="SMR" id="P0DTF9"/>
<dbReference type="PeptideAtlas" id="P0DTF9"/>
<dbReference type="Ensembl" id="ENST00000509356.2">
    <property type="protein sequence ID" value="ENSP00000504097.1"/>
    <property type="gene ID" value="ENSG00000251154.2"/>
</dbReference>
<dbReference type="GeneID" id="102723899"/>
<dbReference type="MANE-Select" id="ENST00000509356.2">
    <property type="protein sequence ID" value="ENSP00000504097.1"/>
    <property type="RefSeq nucleotide sequence ID" value="NM_001365443.2"/>
    <property type="RefSeq protein sequence ID" value="NP_001352372.1"/>
</dbReference>
<dbReference type="AGR" id="HGNC:55318"/>
<dbReference type="GeneCards" id="PTTG1IP2"/>
<dbReference type="HGNC" id="HGNC:55318">
    <property type="gene designation" value="PTTG1IP2"/>
</dbReference>
<dbReference type="HPA" id="ENSG00000251154">
    <property type="expression patterns" value="Tissue enriched (testis)"/>
</dbReference>
<dbReference type="neXtProt" id="NX_P0DTF9"/>
<dbReference type="GeneTree" id="ENSGT00390000004977"/>
<dbReference type="InParanoid" id="P0DTF9"/>
<dbReference type="OMA" id="RCIWCRE"/>
<dbReference type="OrthoDB" id="9607952at2759"/>
<dbReference type="PRO" id="PR:P0DTF9"/>
<dbReference type="Proteomes" id="UP000005640">
    <property type="component" value="Chromosome 7"/>
</dbReference>
<dbReference type="Bgee" id="ENSG00000251154">
    <property type="expression patterns" value="Expressed in male germ line stem cell (sensu Vertebrata) in testis and 8 other cell types or tissues"/>
</dbReference>
<dbReference type="GO" id="GO:0016020">
    <property type="term" value="C:membrane"/>
    <property type="evidence" value="ECO:0007669"/>
    <property type="project" value="UniProtKB-SubCell"/>
</dbReference>
<dbReference type="InterPro" id="IPR052304">
    <property type="entry name" value="PTTG1IP"/>
</dbReference>
<dbReference type="PANTHER" id="PTHR15191:SF14">
    <property type="entry name" value="PITUITARY TUMOR-TRANSFORMING GENE 1 PROTEIN-INTERACTING PROTEIN"/>
    <property type="match status" value="1"/>
</dbReference>
<dbReference type="PANTHER" id="PTHR15191">
    <property type="entry name" value="PROTEIN CBG20567"/>
    <property type="match status" value="1"/>
</dbReference>